<accession>A0AK82</accession>
<proteinExistence type="inferred from homology"/>
<reference key="1">
    <citation type="journal article" date="2006" name="J. Bacteriol.">
        <title>Whole-genome sequence of Listeria welshimeri reveals common steps in genome reduction with Listeria innocua as compared to Listeria monocytogenes.</title>
        <authorList>
            <person name="Hain T."/>
            <person name="Steinweg C."/>
            <person name="Kuenne C.T."/>
            <person name="Billion A."/>
            <person name="Ghai R."/>
            <person name="Chatterjee S.S."/>
            <person name="Domann E."/>
            <person name="Kaerst U."/>
            <person name="Goesmann A."/>
            <person name="Bekel T."/>
            <person name="Bartels D."/>
            <person name="Kaiser O."/>
            <person name="Meyer F."/>
            <person name="Puehler A."/>
            <person name="Weisshaar B."/>
            <person name="Wehland J."/>
            <person name="Liang C."/>
            <person name="Dandekar T."/>
            <person name="Lampidis R."/>
            <person name="Kreft J."/>
            <person name="Goebel W."/>
            <person name="Chakraborty T."/>
        </authorList>
    </citation>
    <scope>NUCLEOTIDE SEQUENCE [LARGE SCALE GENOMIC DNA]</scope>
    <source>
        <strain>ATCC 35897 / DSM 20650 / CCUG 15529 / CIP 8149 / NCTC 11857 / SLCC 5334 / V8</strain>
    </source>
</reference>
<organism>
    <name type="scientific">Listeria welshimeri serovar 6b (strain ATCC 35897 / DSM 20650 / CCUG 15529 / CIP 8149 / NCTC 11857 / SLCC 5334 / V8)</name>
    <dbReference type="NCBI Taxonomy" id="386043"/>
    <lineage>
        <taxon>Bacteria</taxon>
        <taxon>Bacillati</taxon>
        <taxon>Bacillota</taxon>
        <taxon>Bacilli</taxon>
        <taxon>Bacillales</taxon>
        <taxon>Listeriaceae</taxon>
        <taxon>Listeria</taxon>
    </lineage>
</organism>
<comment type="function">
    <text evidence="1">Zinc phosphodiesterase, which displays some tRNA 3'-processing endonuclease activity. Probably involved in tRNA maturation, by removing a 3'-trailer from precursor tRNA.</text>
</comment>
<comment type="catalytic activity">
    <reaction evidence="1">
        <text>Endonucleolytic cleavage of RNA, removing extra 3' nucleotides from tRNA precursor, generating 3' termini of tRNAs. A 3'-hydroxy group is left at the tRNA terminus and a 5'-phosphoryl group is left at the trailer molecule.</text>
        <dbReference type="EC" id="3.1.26.11"/>
    </reaction>
</comment>
<comment type="cofactor">
    <cofactor evidence="1">
        <name>Zn(2+)</name>
        <dbReference type="ChEBI" id="CHEBI:29105"/>
    </cofactor>
    <text evidence="1">Binds 2 Zn(2+) ions.</text>
</comment>
<comment type="subunit">
    <text evidence="1">Homodimer.</text>
</comment>
<comment type="similarity">
    <text evidence="1">Belongs to the RNase Z family.</text>
</comment>
<protein>
    <recommendedName>
        <fullName evidence="1">Ribonuclease Z</fullName>
        <shortName evidence="1">RNase Z</shortName>
        <ecNumber evidence="1">3.1.26.11</ecNumber>
    </recommendedName>
    <alternativeName>
        <fullName evidence="1">tRNA 3 endonuclease</fullName>
    </alternativeName>
    <alternativeName>
        <fullName evidence="1">tRNase Z</fullName>
    </alternativeName>
</protein>
<gene>
    <name evidence="1" type="primary">rnz</name>
    <name type="ordered locus">lwe1996</name>
</gene>
<sequence>MELVFLGTGAGVPSRGRNVTSIALSMLNERKTIWLFDCGEATQHQIMRSQIKLSKLEKIFITHMHGDHIFGLPGLLSSRSFQGGDSTITIYGPAGIAEYVETSLRLSGTRLTYKIIFNEIEPGLIFEDKMFSVIADDLEHGVRSFGYRIVEKDKQGALNAEKLKAEGIEAGPIFQKLKNGEVVELEDGRVVDGKNYIGEPQKGKIISIFGDTKETASELELALNADILVHEATFEGDKGKMAGEYMHSTTLQAANLAKKANVKKLILTHISSRYDRDASKALLIEAKSVFENTEIAYDLAVFEVGE</sequence>
<evidence type="ECO:0000255" key="1">
    <source>
        <dbReference type="HAMAP-Rule" id="MF_01818"/>
    </source>
</evidence>
<dbReference type="EC" id="3.1.26.11" evidence="1"/>
<dbReference type="EMBL" id="AM263198">
    <property type="protein sequence ID" value="CAK21414.1"/>
    <property type="molecule type" value="Genomic_DNA"/>
</dbReference>
<dbReference type="RefSeq" id="WP_011702761.1">
    <property type="nucleotide sequence ID" value="NC_008555.1"/>
</dbReference>
<dbReference type="SMR" id="A0AK82"/>
<dbReference type="STRING" id="386043.lwe1996"/>
<dbReference type="GeneID" id="61189896"/>
<dbReference type="KEGG" id="lwe:lwe1996"/>
<dbReference type="eggNOG" id="COG1234">
    <property type="taxonomic scope" value="Bacteria"/>
</dbReference>
<dbReference type="HOGENOM" id="CLU_031317_2_0_9"/>
<dbReference type="OrthoDB" id="9800940at2"/>
<dbReference type="Proteomes" id="UP000000779">
    <property type="component" value="Chromosome"/>
</dbReference>
<dbReference type="GO" id="GO:0042781">
    <property type="term" value="F:3'-tRNA processing endoribonuclease activity"/>
    <property type="evidence" value="ECO:0007669"/>
    <property type="project" value="UniProtKB-UniRule"/>
</dbReference>
<dbReference type="GO" id="GO:0008270">
    <property type="term" value="F:zinc ion binding"/>
    <property type="evidence" value="ECO:0007669"/>
    <property type="project" value="UniProtKB-UniRule"/>
</dbReference>
<dbReference type="CDD" id="cd07717">
    <property type="entry name" value="RNaseZ_ZiPD-like_MBL-fold"/>
    <property type="match status" value="1"/>
</dbReference>
<dbReference type="FunFam" id="3.60.15.10:FF:000002">
    <property type="entry name" value="Ribonuclease Z"/>
    <property type="match status" value="1"/>
</dbReference>
<dbReference type="Gene3D" id="3.60.15.10">
    <property type="entry name" value="Ribonuclease Z/Hydroxyacylglutathione hydrolase-like"/>
    <property type="match status" value="1"/>
</dbReference>
<dbReference type="HAMAP" id="MF_01818">
    <property type="entry name" value="RNase_Z_BN"/>
    <property type="match status" value="1"/>
</dbReference>
<dbReference type="InterPro" id="IPR001279">
    <property type="entry name" value="Metallo-B-lactamas"/>
</dbReference>
<dbReference type="InterPro" id="IPR036866">
    <property type="entry name" value="RibonucZ/Hydroxyglut_hydro"/>
</dbReference>
<dbReference type="InterPro" id="IPR013471">
    <property type="entry name" value="RNase_Z/BN"/>
</dbReference>
<dbReference type="NCBIfam" id="NF000800">
    <property type="entry name" value="PRK00055.1-1"/>
    <property type="match status" value="1"/>
</dbReference>
<dbReference type="NCBIfam" id="NF000801">
    <property type="entry name" value="PRK00055.1-3"/>
    <property type="match status" value="1"/>
</dbReference>
<dbReference type="NCBIfam" id="TIGR02651">
    <property type="entry name" value="RNase_Z"/>
    <property type="match status" value="1"/>
</dbReference>
<dbReference type="PANTHER" id="PTHR46018">
    <property type="entry name" value="ZINC PHOSPHODIESTERASE ELAC PROTEIN 1"/>
    <property type="match status" value="1"/>
</dbReference>
<dbReference type="PANTHER" id="PTHR46018:SF2">
    <property type="entry name" value="ZINC PHOSPHODIESTERASE ELAC PROTEIN 1"/>
    <property type="match status" value="1"/>
</dbReference>
<dbReference type="Pfam" id="PF12706">
    <property type="entry name" value="Lactamase_B_2"/>
    <property type="match status" value="1"/>
</dbReference>
<dbReference type="SUPFAM" id="SSF56281">
    <property type="entry name" value="Metallo-hydrolase/oxidoreductase"/>
    <property type="match status" value="1"/>
</dbReference>
<feature type="chain" id="PRO_1000070295" description="Ribonuclease Z">
    <location>
        <begin position="1"/>
        <end position="306"/>
    </location>
</feature>
<feature type="active site" description="Proton acceptor" evidence="1">
    <location>
        <position position="67"/>
    </location>
</feature>
<feature type="binding site" evidence="1">
    <location>
        <position position="63"/>
    </location>
    <ligand>
        <name>Zn(2+)</name>
        <dbReference type="ChEBI" id="CHEBI:29105"/>
        <label>1</label>
        <note>catalytic</note>
    </ligand>
</feature>
<feature type="binding site" evidence="1">
    <location>
        <position position="65"/>
    </location>
    <ligand>
        <name>Zn(2+)</name>
        <dbReference type="ChEBI" id="CHEBI:29105"/>
        <label>1</label>
        <note>catalytic</note>
    </ligand>
</feature>
<feature type="binding site" evidence="1">
    <location>
        <position position="67"/>
    </location>
    <ligand>
        <name>Zn(2+)</name>
        <dbReference type="ChEBI" id="CHEBI:29105"/>
        <label>2</label>
        <note>catalytic</note>
    </ligand>
</feature>
<feature type="binding site" evidence="1">
    <location>
        <position position="68"/>
    </location>
    <ligand>
        <name>Zn(2+)</name>
        <dbReference type="ChEBI" id="CHEBI:29105"/>
        <label>2</label>
        <note>catalytic</note>
    </ligand>
</feature>
<feature type="binding site" evidence="1">
    <location>
        <position position="140"/>
    </location>
    <ligand>
        <name>Zn(2+)</name>
        <dbReference type="ChEBI" id="CHEBI:29105"/>
        <label>1</label>
        <note>catalytic</note>
    </ligand>
</feature>
<feature type="binding site" evidence="1">
    <location>
        <position position="211"/>
    </location>
    <ligand>
        <name>Zn(2+)</name>
        <dbReference type="ChEBI" id="CHEBI:29105"/>
        <label>1</label>
        <note>catalytic</note>
    </ligand>
</feature>
<feature type="binding site" evidence="1">
    <location>
        <position position="211"/>
    </location>
    <ligand>
        <name>Zn(2+)</name>
        <dbReference type="ChEBI" id="CHEBI:29105"/>
        <label>2</label>
        <note>catalytic</note>
    </ligand>
</feature>
<feature type="binding site" evidence="1">
    <location>
        <position position="269"/>
    </location>
    <ligand>
        <name>Zn(2+)</name>
        <dbReference type="ChEBI" id="CHEBI:29105"/>
        <label>2</label>
        <note>catalytic</note>
    </ligand>
</feature>
<keyword id="KW-0255">Endonuclease</keyword>
<keyword id="KW-0378">Hydrolase</keyword>
<keyword id="KW-0479">Metal-binding</keyword>
<keyword id="KW-0540">Nuclease</keyword>
<keyword id="KW-0819">tRNA processing</keyword>
<keyword id="KW-0862">Zinc</keyword>
<name>RNZ_LISW6</name>